<accession>Q6LYE0</accession>
<reference key="1">
    <citation type="journal article" date="2004" name="J. Bacteriol.">
        <title>Complete genome sequence of the genetically tractable hydrogenotrophic methanogen Methanococcus maripaludis.</title>
        <authorList>
            <person name="Hendrickson E.L."/>
            <person name="Kaul R."/>
            <person name="Zhou Y."/>
            <person name="Bovee D."/>
            <person name="Chapman P."/>
            <person name="Chung J."/>
            <person name="Conway de Macario E."/>
            <person name="Dodsworth J.A."/>
            <person name="Gillett W."/>
            <person name="Graham D.E."/>
            <person name="Hackett M."/>
            <person name="Haydock A.K."/>
            <person name="Kang A."/>
            <person name="Land M.L."/>
            <person name="Levy R."/>
            <person name="Lie T.J."/>
            <person name="Major T.A."/>
            <person name="Moore B.C."/>
            <person name="Porat I."/>
            <person name="Palmeiri A."/>
            <person name="Rouse G."/>
            <person name="Saenphimmachak C."/>
            <person name="Soell D."/>
            <person name="Van Dien S."/>
            <person name="Wang T."/>
            <person name="Whitman W.B."/>
            <person name="Xia Q."/>
            <person name="Zhang Y."/>
            <person name="Larimer F.W."/>
            <person name="Olson M.V."/>
            <person name="Leigh J.A."/>
        </authorList>
    </citation>
    <scope>NUCLEOTIDE SEQUENCE [LARGE SCALE GENOMIC DNA]</scope>
    <source>
        <strain>DSM 14266 / JCM 13030 / NBRC 101832 / S2 / LL</strain>
    </source>
</reference>
<dbReference type="EC" id="3.1.3.5" evidence="1"/>
<dbReference type="EMBL" id="BX950229">
    <property type="protein sequence ID" value="CAF30607.1"/>
    <property type="status" value="ALT_INIT"/>
    <property type="molecule type" value="Genomic_DNA"/>
</dbReference>
<dbReference type="SMR" id="Q6LYE0"/>
<dbReference type="STRING" id="267377.MMP1051"/>
<dbReference type="EnsemblBacteria" id="CAF30607">
    <property type="protein sequence ID" value="CAF30607"/>
    <property type="gene ID" value="MMP1051"/>
</dbReference>
<dbReference type="KEGG" id="mmp:MMP1051"/>
<dbReference type="PATRIC" id="fig|267377.15.peg.1084"/>
<dbReference type="eggNOG" id="arCOG02303">
    <property type="taxonomic scope" value="Archaea"/>
</dbReference>
<dbReference type="HOGENOM" id="CLU_045192_1_3_2"/>
<dbReference type="Proteomes" id="UP000000590">
    <property type="component" value="Chromosome"/>
</dbReference>
<dbReference type="GO" id="GO:0005737">
    <property type="term" value="C:cytoplasm"/>
    <property type="evidence" value="ECO:0007669"/>
    <property type="project" value="UniProtKB-SubCell"/>
</dbReference>
<dbReference type="GO" id="GO:0008253">
    <property type="term" value="F:5'-nucleotidase activity"/>
    <property type="evidence" value="ECO:0007669"/>
    <property type="project" value="UniProtKB-UniRule"/>
</dbReference>
<dbReference type="GO" id="GO:0046872">
    <property type="term" value="F:metal ion binding"/>
    <property type="evidence" value="ECO:0007669"/>
    <property type="project" value="UniProtKB-UniRule"/>
</dbReference>
<dbReference type="GO" id="GO:0000166">
    <property type="term" value="F:nucleotide binding"/>
    <property type="evidence" value="ECO:0007669"/>
    <property type="project" value="UniProtKB-KW"/>
</dbReference>
<dbReference type="Gene3D" id="3.40.1210.10">
    <property type="entry name" value="Survival protein SurE-like phosphatase/nucleotidase"/>
    <property type="match status" value="1"/>
</dbReference>
<dbReference type="HAMAP" id="MF_00060">
    <property type="entry name" value="SurE"/>
    <property type="match status" value="1"/>
</dbReference>
<dbReference type="InterPro" id="IPR030048">
    <property type="entry name" value="SurE"/>
</dbReference>
<dbReference type="InterPro" id="IPR002828">
    <property type="entry name" value="SurE-like_Pase/nucleotidase"/>
</dbReference>
<dbReference type="InterPro" id="IPR036523">
    <property type="entry name" value="SurE-like_sf"/>
</dbReference>
<dbReference type="NCBIfam" id="NF001491">
    <property type="entry name" value="PRK00346.2-1"/>
    <property type="match status" value="1"/>
</dbReference>
<dbReference type="NCBIfam" id="TIGR00087">
    <property type="entry name" value="surE"/>
    <property type="match status" value="1"/>
</dbReference>
<dbReference type="PANTHER" id="PTHR30457">
    <property type="entry name" value="5'-NUCLEOTIDASE SURE"/>
    <property type="match status" value="1"/>
</dbReference>
<dbReference type="PANTHER" id="PTHR30457:SF0">
    <property type="entry name" value="PHOSPHATASE, PUTATIVE (AFU_ORTHOLOGUE AFUA_4G01070)-RELATED"/>
    <property type="match status" value="1"/>
</dbReference>
<dbReference type="Pfam" id="PF01975">
    <property type="entry name" value="SurE"/>
    <property type="match status" value="1"/>
</dbReference>
<dbReference type="SUPFAM" id="SSF64167">
    <property type="entry name" value="SurE-like"/>
    <property type="match status" value="1"/>
</dbReference>
<sequence length="262" mass="28980">MEILLVNDDGIYSNGLLALKNVICEEFDANVTVVAPTNQQSGIGRAISLFEPLRITKTKLADCSEGYAVSGTPTDCVVLGVHQVLKKVPDYIISGINIGENLGTEITTSGTLGAAFEGAHHGAKSFACSLQVTTDHLKFKEGESPIEFMTAARIVKNVFKKFLDDEFPCDVVNINVPDNATENTPVEITKLAKRMYSMHVEERIDPRSRSYYWLDGYPVMDEEDGTDVYAVRNKRNVSVTPLTLDNTAKNIDEFKEKYGKKF</sequence>
<organism>
    <name type="scientific">Methanococcus maripaludis (strain DSM 14266 / JCM 13030 / NBRC 101832 / S2 / LL)</name>
    <dbReference type="NCBI Taxonomy" id="267377"/>
    <lineage>
        <taxon>Archaea</taxon>
        <taxon>Methanobacteriati</taxon>
        <taxon>Methanobacteriota</taxon>
        <taxon>Methanomada group</taxon>
        <taxon>Methanococci</taxon>
        <taxon>Methanococcales</taxon>
        <taxon>Methanococcaceae</taxon>
        <taxon>Methanococcus</taxon>
    </lineage>
</organism>
<protein>
    <recommendedName>
        <fullName evidence="1">5'-nucleotidase SurE</fullName>
        <ecNumber evidence="1">3.1.3.5</ecNumber>
    </recommendedName>
    <alternativeName>
        <fullName evidence="1">Nucleoside 5'-monophosphate phosphohydrolase</fullName>
    </alternativeName>
</protein>
<gene>
    <name evidence="1" type="primary">surE</name>
    <name type="ordered locus">MMP1051</name>
</gene>
<keyword id="KW-0963">Cytoplasm</keyword>
<keyword id="KW-0378">Hydrolase</keyword>
<keyword id="KW-0479">Metal-binding</keyword>
<keyword id="KW-0547">Nucleotide-binding</keyword>
<keyword id="KW-1185">Reference proteome</keyword>
<comment type="function">
    <text evidence="1">Nucleotidase that shows phosphatase activity on nucleoside 5'-monophosphates.</text>
</comment>
<comment type="catalytic activity">
    <reaction evidence="1">
        <text>a ribonucleoside 5'-phosphate + H2O = a ribonucleoside + phosphate</text>
        <dbReference type="Rhea" id="RHEA:12484"/>
        <dbReference type="ChEBI" id="CHEBI:15377"/>
        <dbReference type="ChEBI" id="CHEBI:18254"/>
        <dbReference type="ChEBI" id="CHEBI:43474"/>
        <dbReference type="ChEBI" id="CHEBI:58043"/>
        <dbReference type="EC" id="3.1.3.5"/>
    </reaction>
</comment>
<comment type="cofactor">
    <cofactor evidence="1">
        <name>a divalent metal cation</name>
        <dbReference type="ChEBI" id="CHEBI:60240"/>
    </cofactor>
    <text evidence="1">Binds 1 divalent metal cation per subunit.</text>
</comment>
<comment type="subcellular location">
    <subcellularLocation>
        <location evidence="1">Cytoplasm</location>
    </subcellularLocation>
</comment>
<comment type="similarity">
    <text evidence="1">Belongs to the SurE nucleotidase family.</text>
</comment>
<comment type="sequence caution" evidence="2">
    <conflict type="erroneous initiation">
        <sequence resource="EMBL-CDS" id="CAF30607"/>
    </conflict>
</comment>
<proteinExistence type="inferred from homology"/>
<evidence type="ECO:0000255" key="1">
    <source>
        <dbReference type="HAMAP-Rule" id="MF_00060"/>
    </source>
</evidence>
<evidence type="ECO:0000305" key="2"/>
<name>SURE_METMP</name>
<feature type="chain" id="PRO_0000235676" description="5'-nucleotidase SurE">
    <location>
        <begin position="1"/>
        <end position="262"/>
    </location>
</feature>
<feature type="binding site" evidence="1">
    <location>
        <position position="8"/>
    </location>
    <ligand>
        <name>a divalent metal cation</name>
        <dbReference type="ChEBI" id="CHEBI:60240"/>
    </ligand>
</feature>
<feature type="binding site" evidence="1">
    <location>
        <position position="9"/>
    </location>
    <ligand>
        <name>a divalent metal cation</name>
        <dbReference type="ChEBI" id="CHEBI:60240"/>
    </ligand>
</feature>
<feature type="binding site" evidence="1">
    <location>
        <position position="41"/>
    </location>
    <ligand>
        <name>a divalent metal cation</name>
        <dbReference type="ChEBI" id="CHEBI:60240"/>
    </ligand>
</feature>
<feature type="binding site" evidence="1">
    <location>
        <position position="97"/>
    </location>
    <ligand>
        <name>a divalent metal cation</name>
        <dbReference type="ChEBI" id="CHEBI:60240"/>
    </ligand>
</feature>